<comment type="interaction">
    <interactant intactId="EBI-29183">
        <id>P53863</id>
    </interactant>
    <interactant intactId="EBI-21136">
        <id>P38344</id>
        <label>REI1</label>
    </interactant>
    <organismsDiffer>false</organismsDiffer>
    <experiments>6</experiments>
</comment>
<comment type="subcellular location">
    <subcellularLocation>
        <location evidence="5">Nucleus</location>
    </subcellularLocation>
</comment>
<comment type="miscellaneous">
    <text evidence="4">Present with 2310 molecules/cell in log phase SD medium.</text>
</comment>
<gene>
    <name type="primary">JJJ1</name>
    <name type="ordered locus">YNL227C</name>
    <name type="ORF">N1254</name>
</gene>
<sequence length="590" mass="68783">MKTCYYELLGVETHASDLELKKAYRKKALQYHPDKNPDNVEEATQKFAVIRAAYEVLSDPQERAWYDSHKEQILNDTPPSTDDYYDYEVDATVTGVTTDELLLFFNSALYTKIDNSAAGIYQIAGKIFAKLAKDEILSGKRLGKFSEYQDDVFEQDINSIGYLKACDNFINKTDKLLYPLFGYSPTDYEYLKHFYKTWSAFNTLKSFSWKDEYMYSKNYDRRTKREVNRRNEKARQQARNEYNKTVKRFVVFIKKLDKRMKEGAKIAEEQRKLKEQQRKNELNNRRKFGNDNNDEEKFHLQSWQTVKEENWDELEKVYDNFGEFENSKNDKEGEVLIYECFICNKTFKSEKQLKNHINTKLHKKNMEEIRKEMEEENITLGLDNLSDLEKFDSADESVKEKEDIDLQALQAELAEIERKLAESSSEDESEDDNLNIEMDIEVEDVSSDENVHVNTKNKKKRKKKKKAKVDTETEESESFDDTKDKRSNELDDLLASLGDKGLQTDDDEDWSTKAKKKKGKQPKKNSKSTKSTPSLSTLPSSMSPTSAIEVCTTCGESFDSRNKLFNHVKIAGHAAVKNVVKRKKVKTKRI</sequence>
<feature type="chain" id="PRO_0000071162" description="J protein JJJ1">
    <location>
        <begin position="1"/>
        <end position="590"/>
    </location>
</feature>
<feature type="domain" description="J" evidence="2">
    <location>
        <begin position="3"/>
        <end position="72"/>
    </location>
</feature>
<feature type="zinc finger region" description="C2H2-type 1" evidence="1">
    <location>
        <begin position="338"/>
        <end position="362"/>
    </location>
</feature>
<feature type="zinc finger region" description="C2H2-type 2" evidence="1">
    <location>
        <begin position="549"/>
        <end position="573"/>
    </location>
</feature>
<feature type="region of interest" description="Disordered" evidence="3">
    <location>
        <begin position="269"/>
        <end position="293"/>
    </location>
</feature>
<feature type="region of interest" description="Disordered" evidence="3">
    <location>
        <begin position="441"/>
        <end position="546"/>
    </location>
</feature>
<feature type="compositionally biased region" description="Basic and acidic residues" evidence="3">
    <location>
        <begin position="269"/>
        <end position="284"/>
    </location>
</feature>
<feature type="compositionally biased region" description="Basic residues" evidence="3">
    <location>
        <begin position="455"/>
        <end position="467"/>
    </location>
</feature>
<feature type="compositionally biased region" description="Basic and acidic residues" evidence="3">
    <location>
        <begin position="480"/>
        <end position="489"/>
    </location>
</feature>
<feature type="compositionally biased region" description="Basic residues" evidence="3">
    <location>
        <begin position="513"/>
        <end position="527"/>
    </location>
</feature>
<feature type="compositionally biased region" description="Low complexity" evidence="3">
    <location>
        <begin position="528"/>
        <end position="546"/>
    </location>
</feature>
<feature type="modified residue" description="Phosphoserine" evidence="8">
    <location>
        <position position="393"/>
    </location>
</feature>
<feature type="modified residue" description="Phosphothreonine" evidence="6 7 8">
    <location>
        <position position="504"/>
    </location>
</feature>
<evidence type="ECO:0000255" key="1">
    <source>
        <dbReference type="PROSITE-ProRule" id="PRU00042"/>
    </source>
</evidence>
<evidence type="ECO:0000255" key="2">
    <source>
        <dbReference type="PROSITE-ProRule" id="PRU00286"/>
    </source>
</evidence>
<evidence type="ECO:0000256" key="3">
    <source>
        <dbReference type="SAM" id="MobiDB-lite"/>
    </source>
</evidence>
<evidence type="ECO:0000269" key="4">
    <source>
    </source>
</evidence>
<evidence type="ECO:0000305" key="5"/>
<evidence type="ECO:0007744" key="6">
    <source>
    </source>
</evidence>
<evidence type="ECO:0007744" key="7">
    <source>
    </source>
</evidence>
<evidence type="ECO:0007744" key="8">
    <source>
    </source>
</evidence>
<protein>
    <recommendedName>
        <fullName>J protein JJJ1</fullName>
    </recommendedName>
</protein>
<accession>P53863</accession>
<accession>D6W0W4</accession>
<dbReference type="EMBL" id="Z69381">
    <property type="protein sequence ID" value="CAA93371.1"/>
    <property type="molecule type" value="Genomic_DNA"/>
</dbReference>
<dbReference type="EMBL" id="Z71504">
    <property type="protein sequence ID" value="CAA96132.1"/>
    <property type="molecule type" value="Genomic_DNA"/>
</dbReference>
<dbReference type="EMBL" id="BK006947">
    <property type="protein sequence ID" value="DAA10330.1"/>
    <property type="molecule type" value="Genomic_DNA"/>
</dbReference>
<dbReference type="PIR" id="S63193">
    <property type="entry name" value="S63193"/>
</dbReference>
<dbReference type="RefSeq" id="NP_014172.1">
    <property type="nucleotide sequence ID" value="NM_001183065.1"/>
</dbReference>
<dbReference type="SMR" id="P53863"/>
<dbReference type="BioGRID" id="35610">
    <property type="interactions" value="245"/>
</dbReference>
<dbReference type="DIP" id="DIP-972N"/>
<dbReference type="FunCoup" id="P53863">
    <property type="interactions" value="1049"/>
</dbReference>
<dbReference type="IntAct" id="P53863">
    <property type="interactions" value="65"/>
</dbReference>
<dbReference type="MINT" id="P53863"/>
<dbReference type="STRING" id="4932.YNL227C"/>
<dbReference type="iPTMnet" id="P53863"/>
<dbReference type="PaxDb" id="4932-YNL227C"/>
<dbReference type="PeptideAtlas" id="P53863"/>
<dbReference type="EnsemblFungi" id="YNL227C_mRNA">
    <property type="protein sequence ID" value="YNL227C"/>
    <property type="gene ID" value="YNL227C"/>
</dbReference>
<dbReference type="GeneID" id="855495"/>
<dbReference type="KEGG" id="sce:YNL227C"/>
<dbReference type="AGR" id="SGD:S000005171"/>
<dbReference type="SGD" id="S000005171">
    <property type="gene designation" value="JJJ1"/>
</dbReference>
<dbReference type="VEuPathDB" id="FungiDB:YNL227C"/>
<dbReference type="eggNOG" id="KOG0717">
    <property type="taxonomic scope" value="Eukaryota"/>
</dbReference>
<dbReference type="HOGENOM" id="CLU_009539_2_1_1"/>
<dbReference type="InParanoid" id="P53863"/>
<dbReference type="OMA" id="RANHEES"/>
<dbReference type="OrthoDB" id="5894at2759"/>
<dbReference type="BioCyc" id="YEAST:G3O-33229-MONOMER"/>
<dbReference type="BioGRID-ORCS" id="855495">
    <property type="hits" value="0 hits in 10 CRISPR screens"/>
</dbReference>
<dbReference type="PRO" id="PR:P53863"/>
<dbReference type="Proteomes" id="UP000002311">
    <property type="component" value="Chromosome XIV"/>
</dbReference>
<dbReference type="RNAct" id="P53863">
    <property type="molecule type" value="protein"/>
</dbReference>
<dbReference type="GO" id="GO:0005737">
    <property type="term" value="C:cytoplasm"/>
    <property type="evidence" value="ECO:0000314"/>
    <property type="project" value="SGD"/>
</dbReference>
<dbReference type="GO" id="GO:0005829">
    <property type="term" value="C:cytosol"/>
    <property type="evidence" value="ECO:0000314"/>
    <property type="project" value="SGD"/>
</dbReference>
<dbReference type="GO" id="GO:0005739">
    <property type="term" value="C:mitochondrion"/>
    <property type="evidence" value="ECO:0007005"/>
    <property type="project" value="SGD"/>
</dbReference>
<dbReference type="GO" id="GO:0005730">
    <property type="term" value="C:nucleolus"/>
    <property type="evidence" value="ECO:0000315"/>
    <property type="project" value="SGD"/>
</dbReference>
<dbReference type="GO" id="GO:0001671">
    <property type="term" value="F:ATPase activator activity"/>
    <property type="evidence" value="ECO:0000314"/>
    <property type="project" value="SGD"/>
</dbReference>
<dbReference type="GO" id="GO:0008270">
    <property type="term" value="F:zinc ion binding"/>
    <property type="evidence" value="ECO:0007669"/>
    <property type="project" value="UniProtKB-KW"/>
</dbReference>
<dbReference type="GO" id="GO:0006897">
    <property type="term" value="P:endocytosis"/>
    <property type="evidence" value="ECO:0000315"/>
    <property type="project" value="SGD"/>
</dbReference>
<dbReference type="GO" id="GO:0008361">
    <property type="term" value="P:regulation of cell size"/>
    <property type="evidence" value="ECO:0007001"/>
    <property type="project" value="SGD"/>
</dbReference>
<dbReference type="GO" id="GO:0042273">
    <property type="term" value="P:ribosomal large subunit biogenesis"/>
    <property type="evidence" value="ECO:0000315"/>
    <property type="project" value="SGD"/>
</dbReference>
<dbReference type="GO" id="GO:0000055">
    <property type="term" value="P:ribosomal large subunit export from nucleus"/>
    <property type="evidence" value="ECO:0000315"/>
    <property type="project" value="SGD"/>
</dbReference>
<dbReference type="GO" id="GO:0006364">
    <property type="term" value="P:rRNA processing"/>
    <property type="evidence" value="ECO:0000315"/>
    <property type="project" value="SGD"/>
</dbReference>
<dbReference type="CDD" id="cd06257">
    <property type="entry name" value="DnaJ"/>
    <property type="match status" value="1"/>
</dbReference>
<dbReference type="FunFam" id="1.10.287.110:FF:000046">
    <property type="entry name" value="dnaJ homolog subfamily C member 21"/>
    <property type="match status" value="1"/>
</dbReference>
<dbReference type="FunFam" id="3.30.160.60:FF:002589">
    <property type="entry name" value="J protein JJJ1"/>
    <property type="match status" value="1"/>
</dbReference>
<dbReference type="Gene3D" id="3.30.160.60">
    <property type="entry name" value="Classic Zinc Finger"/>
    <property type="match status" value="1"/>
</dbReference>
<dbReference type="Gene3D" id="1.10.287.110">
    <property type="entry name" value="DnaJ domain"/>
    <property type="match status" value="1"/>
</dbReference>
<dbReference type="InterPro" id="IPR051964">
    <property type="entry name" value="Chaperone_stress_response"/>
</dbReference>
<dbReference type="InterPro" id="IPR001623">
    <property type="entry name" value="DnaJ_domain"/>
</dbReference>
<dbReference type="InterPro" id="IPR018253">
    <property type="entry name" value="DnaJ_domain_CS"/>
</dbReference>
<dbReference type="InterPro" id="IPR036869">
    <property type="entry name" value="J_dom_sf"/>
</dbReference>
<dbReference type="InterPro" id="IPR022755">
    <property type="entry name" value="Znf_C2H2_jaz"/>
</dbReference>
<dbReference type="InterPro" id="IPR036236">
    <property type="entry name" value="Znf_C2H2_sf"/>
</dbReference>
<dbReference type="InterPro" id="IPR013087">
    <property type="entry name" value="Znf_C2H2_type"/>
</dbReference>
<dbReference type="InterPro" id="IPR054076">
    <property type="entry name" value="ZUO1-like_ZHD"/>
</dbReference>
<dbReference type="PANTHER" id="PTHR44029">
    <property type="entry name" value="DNAJ HOMOLOG SUBFAMILY C MEMBER 21"/>
    <property type="match status" value="1"/>
</dbReference>
<dbReference type="PANTHER" id="PTHR44029:SF1">
    <property type="entry name" value="DNAJ HOMOLOG SUBFAMILY C MEMBER 21"/>
    <property type="match status" value="1"/>
</dbReference>
<dbReference type="Pfam" id="PF00226">
    <property type="entry name" value="DnaJ"/>
    <property type="match status" value="1"/>
</dbReference>
<dbReference type="Pfam" id="PF12171">
    <property type="entry name" value="zf-C2H2_jaz"/>
    <property type="match status" value="1"/>
</dbReference>
<dbReference type="Pfam" id="PF21884">
    <property type="entry name" value="ZUO1-like_ZHD"/>
    <property type="match status" value="1"/>
</dbReference>
<dbReference type="PRINTS" id="PR00625">
    <property type="entry name" value="JDOMAIN"/>
</dbReference>
<dbReference type="SMART" id="SM00271">
    <property type="entry name" value="DnaJ"/>
    <property type="match status" value="1"/>
</dbReference>
<dbReference type="SMART" id="SM00355">
    <property type="entry name" value="ZnF_C2H2"/>
    <property type="match status" value="2"/>
</dbReference>
<dbReference type="SUPFAM" id="SSF57667">
    <property type="entry name" value="beta-beta-alpha zinc fingers"/>
    <property type="match status" value="1"/>
</dbReference>
<dbReference type="SUPFAM" id="SSF46565">
    <property type="entry name" value="Chaperone J-domain"/>
    <property type="match status" value="1"/>
</dbReference>
<dbReference type="PROSITE" id="PS00636">
    <property type="entry name" value="DNAJ_1"/>
    <property type="match status" value="1"/>
</dbReference>
<dbReference type="PROSITE" id="PS50076">
    <property type="entry name" value="DNAJ_2"/>
    <property type="match status" value="1"/>
</dbReference>
<dbReference type="PROSITE" id="PS00028">
    <property type="entry name" value="ZINC_FINGER_C2H2_1"/>
    <property type="match status" value="2"/>
</dbReference>
<dbReference type="PROSITE" id="PS50157">
    <property type="entry name" value="ZINC_FINGER_C2H2_2"/>
    <property type="match status" value="2"/>
</dbReference>
<keyword id="KW-0143">Chaperone</keyword>
<keyword id="KW-0479">Metal-binding</keyword>
<keyword id="KW-0539">Nucleus</keyword>
<keyword id="KW-0597">Phosphoprotein</keyword>
<keyword id="KW-1185">Reference proteome</keyword>
<keyword id="KW-0677">Repeat</keyword>
<keyword id="KW-0862">Zinc</keyword>
<keyword id="KW-0863">Zinc-finger</keyword>
<organism>
    <name type="scientific">Saccharomyces cerevisiae (strain ATCC 204508 / S288c)</name>
    <name type="common">Baker's yeast</name>
    <dbReference type="NCBI Taxonomy" id="559292"/>
    <lineage>
        <taxon>Eukaryota</taxon>
        <taxon>Fungi</taxon>
        <taxon>Dikarya</taxon>
        <taxon>Ascomycota</taxon>
        <taxon>Saccharomycotina</taxon>
        <taxon>Saccharomycetes</taxon>
        <taxon>Saccharomycetales</taxon>
        <taxon>Saccharomycetaceae</taxon>
        <taxon>Saccharomyces</taxon>
    </lineage>
</organism>
<reference key="1">
    <citation type="journal article" date="1996" name="Yeast">
        <title>The DNA sequence of cosmid 14-5 from chromosome XIV reveals 21 open reading frames including a novel gene encoding a globin-like domain.</title>
        <authorList>
            <person name="Pandolfo D."/>
            <person name="de Antoni A."/>
            <person name="Lanfranchi G."/>
            <person name="Valle G."/>
        </authorList>
    </citation>
    <scope>NUCLEOTIDE SEQUENCE [GENOMIC DNA]</scope>
</reference>
<reference key="2">
    <citation type="journal article" date="1997" name="Nature">
        <title>The nucleotide sequence of Saccharomyces cerevisiae chromosome XIV and its evolutionary implications.</title>
        <authorList>
            <person name="Philippsen P."/>
            <person name="Kleine K."/>
            <person name="Poehlmann R."/>
            <person name="Duesterhoeft A."/>
            <person name="Hamberg K."/>
            <person name="Hegemann J.H."/>
            <person name="Obermaier B."/>
            <person name="Urrestarazu L.A."/>
            <person name="Aert R."/>
            <person name="Albermann K."/>
            <person name="Altmann R."/>
            <person name="Andre B."/>
            <person name="Baladron V."/>
            <person name="Ballesta J.P.G."/>
            <person name="Becam A.-M."/>
            <person name="Beinhauer J.D."/>
            <person name="Boskovic J."/>
            <person name="Buitrago M.J."/>
            <person name="Bussereau F."/>
            <person name="Coster F."/>
            <person name="Crouzet M."/>
            <person name="D'Angelo M."/>
            <person name="Dal Pero F."/>
            <person name="De Antoni A."/>
            <person name="del Rey F."/>
            <person name="Doignon F."/>
            <person name="Domdey H."/>
            <person name="Dubois E."/>
            <person name="Fiedler T.A."/>
            <person name="Fleig U."/>
            <person name="Floeth M."/>
            <person name="Fritz C."/>
            <person name="Gaillardin C."/>
            <person name="Garcia-Cantalejo J.M."/>
            <person name="Glansdorff N."/>
            <person name="Goffeau A."/>
            <person name="Gueldener U."/>
            <person name="Herbert C.J."/>
            <person name="Heumann K."/>
            <person name="Heuss-Neitzel D."/>
            <person name="Hilbert H."/>
            <person name="Hinni K."/>
            <person name="Iraqui Houssaini I."/>
            <person name="Jacquet M."/>
            <person name="Jimenez A."/>
            <person name="Jonniaux J.-L."/>
            <person name="Karpfinger-Hartl L."/>
            <person name="Lanfranchi G."/>
            <person name="Lepingle A."/>
            <person name="Levesque H."/>
            <person name="Lyck R."/>
            <person name="Maftahi M."/>
            <person name="Mallet L."/>
            <person name="Maurer C.T.C."/>
            <person name="Messenguy F."/>
            <person name="Mewes H.-W."/>
            <person name="Moestl D."/>
            <person name="Nasr F."/>
            <person name="Nicaud J.-M."/>
            <person name="Niedenthal R.K."/>
            <person name="Pandolfo D."/>
            <person name="Pierard A."/>
            <person name="Piravandi E."/>
            <person name="Planta R.J."/>
            <person name="Pohl T.M."/>
            <person name="Purnelle B."/>
            <person name="Rebischung C."/>
            <person name="Remacha M.A."/>
            <person name="Revuelta J.L."/>
            <person name="Rinke M."/>
            <person name="Saiz J.E."/>
            <person name="Sartorello F."/>
            <person name="Scherens B."/>
            <person name="Sen-Gupta M."/>
            <person name="Soler-Mira A."/>
            <person name="Urbanus J.H.M."/>
            <person name="Valle G."/>
            <person name="Van Dyck L."/>
            <person name="Verhasselt P."/>
            <person name="Vierendeels F."/>
            <person name="Vissers S."/>
            <person name="Voet M."/>
            <person name="Volckaert G."/>
            <person name="Wach A."/>
            <person name="Wambutt R."/>
            <person name="Wedler H."/>
            <person name="Zollner A."/>
            <person name="Hani J."/>
        </authorList>
    </citation>
    <scope>NUCLEOTIDE SEQUENCE [LARGE SCALE GENOMIC DNA]</scope>
    <source>
        <strain>ATCC 204508 / S288c</strain>
    </source>
</reference>
<reference key="3">
    <citation type="journal article" date="2014" name="G3 (Bethesda)">
        <title>The reference genome sequence of Saccharomyces cerevisiae: Then and now.</title>
        <authorList>
            <person name="Engel S.R."/>
            <person name="Dietrich F.S."/>
            <person name="Fisk D.G."/>
            <person name="Binkley G."/>
            <person name="Balakrishnan R."/>
            <person name="Costanzo M.C."/>
            <person name="Dwight S.S."/>
            <person name="Hitz B.C."/>
            <person name="Karra K."/>
            <person name="Nash R.S."/>
            <person name="Weng S."/>
            <person name="Wong E.D."/>
            <person name="Lloyd P."/>
            <person name="Skrzypek M.S."/>
            <person name="Miyasato S.R."/>
            <person name="Simison M."/>
            <person name="Cherry J.M."/>
        </authorList>
    </citation>
    <scope>GENOME REANNOTATION</scope>
    <source>
        <strain>ATCC 204508 / S288c</strain>
    </source>
</reference>
<reference key="4">
    <citation type="journal article" date="2003" name="Nature">
        <title>Global analysis of protein expression in yeast.</title>
        <authorList>
            <person name="Ghaemmaghami S."/>
            <person name="Huh W.-K."/>
            <person name="Bower K."/>
            <person name="Howson R.W."/>
            <person name="Belle A."/>
            <person name="Dephoure N."/>
            <person name="O'Shea E.K."/>
            <person name="Weissman J.S."/>
        </authorList>
    </citation>
    <scope>LEVEL OF PROTEIN EXPRESSION [LARGE SCALE ANALYSIS]</scope>
</reference>
<reference key="5">
    <citation type="journal article" date="2007" name="J. Proteome Res.">
        <title>Large-scale phosphorylation analysis of alpha-factor-arrested Saccharomyces cerevisiae.</title>
        <authorList>
            <person name="Li X."/>
            <person name="Gerber S.A."/>
            <person name="Rudner A.D."/>
            <person name="Beausoleil S.A."/>
            <person name="Haas W."/>
            <person name="Villen J."/>
            <person name="Elias J.E."/>
            <person name="Gygi S.P."/>
        </authorList>
    </citation>
    <scope>PHOSPHORYLATION [LARGE SCALE ANALYSIS] AT THR-504</scope>
    <scope>IDENTIFICATION BY MASS SPECTROMETRY [LARGE SCALE ANALYSIS]</scope>
    <source>
        <strain>ADR376</strain>
    </source>
</reference>
<reference key="6">
    <citation type="journal article" date="2008" name="Mol. Cell. Proteomics">
        <title>A multidimensional chromatography technology for in-depth phosphoproteome analysis.</title>
        <authorList>
            <person name="Albuquerque C.P."/>
            <person name="Smolka M.B."/>
            <person name="Payne S.H."/>
            <person name="Bafna V."/>
            <person name="Eng J."/>
            <person name="Zhou H."/>
        </authorList>
    </citation>
    <scope>PHOSPHORYLATION [LARGE SCALE ANALYSIS] AT THR-504</scope>
    <scope>IDENTIFICATION BY MASS SPECTROMETRY [LARGE SCALE ANALYSIS]</scope>
</reference>
<reference key="7">
    <citation type="journal article" date="2009" name="Science">
        <title>Global analysis of Cdk1 substrate phosphorylation sites provides insights into evolution.</title>
        <authorList>
            <person name="Holt L.J."/>
            <person name="Tuch B.B."/>
            <person name="Villen J."/>
            <person name="Johnson A.D."/>
            <person name="Gygi S.P."/>
            <person name="Morgan D.O."/>
        </authorList>
    </citation>
    <scope>PHOSPHORYLATION [LARGE SCALE ANALYSIS] AT SER-393 AND THR-504</scope>
    <scope>IDENTIFICATION BY MASS SPECTROMETRY [LARGE SCALE ANALYSIS]</scope>
</reference>
<name>JJJ1_YEAST</name>
<proteinExistence type="evidence at protein level"/>